<keyword id="KW-0017">Alkaloid metabolism</keyword>
<keyword id="KW-0256">Endoplasmic reticulum</keyword>
<keyword id="KW-0349">Heme</keyword>
<keyword id="KW-0408">Iron</keyword>
<keyword id="KW-0472">Membrane</keyword>
<keyword id="KW-0479">Metal-binding</keyword>
<keyword id="KW-0503">Monooxygenase</keyword>
<keyword id="KW-0560">Oxidoreductase</keyword>
<keyword id="KW-0812">Transmembrane</keyword>
<keyword id="KW-1133">Transmembrane helix</keyword>
<accession>Q05047</accession>
<sequence>MEMDMDTIRKAIAATIFALVMAWAWRVLDWAWFTPKRIEKRLRQQGFRGNPYRFLVGDVKESGKMHQEALSKPMEFNNDIVPRLMPHINHTINTYGRNSFTWMGRIPRIHVMEPELIKEVLTHSSKYQKNFDVHNPLVKFLLTGVGSFEGAKWSKHRRIISPAFTLEKLKSMLPAFAICYHDMLTKWEKIAEKQGSHEVDIFPTFDVLTSDVISKVAFGSTYEEGGKIFRLLKELMDLTIDCMRDVYIPGWSYLPTKRNKRMKEINKEITDMLRFIINKRMKALKAGEPGEDDLLGVLLESNIQEIQKQGNKKDGGMSINDVIEECKLFYFAGQETTGVLLTWTTILLSKHPEWQERAREEVLQAFGKNKPEFERLNHLKYVSMILYEVLRLYPPVIDLTKIVHKDTKLGSYTIPAGTQVMLPTVMLHREKSIWGEDAMEFNPMRFVDGVANATKNNVTYLPFSWGPRVCLGQNFALLQAKLGLAMILQRFKFDVAPSYVHAPFTILTVQPQFGSHVIYKKLES</sequence>
<dbReference type="EC" id="1.14.19.62" evidence="3 5"/>
<dbReference type="EMBL" id="L10081">
    <property type="protein sequence ID" value="AAA33106.1"/>
    <property type="molecule type" value="mRNA"/>
</dbReference>
<dbReference type="EMBL" id="X69775">
    <property type="protein sequence ID" value="CAA49430.1"/>
    <property type="molecule type" value="mRNA"/>
</dbReference>
<dbReference type="PIR" id="S35168">
    <property type="entry name" value="S35168"/>
</dbReference>
<dbReference type="PIR" id="T09944">
    <property type="entry name" value="T09944"/>
</dbReference>
<dbReference type="SMR" id="Q05047"/>
<dbReference type="KEGG" id="ag:AAA33106"/>
<dbReference type="OrthoDB" id="1470350at2759"/>
<dbReference type="BRENDA" id="1.14.19.62">
    <property type="organism ID" value="1211"/>
</dbReference>
<dbReference type="UniPathway" id="UPA00328"/>
<dbReference type="GO" id="GO:0005789">
    <property type="term" value="C:endoplasmic reticulum membrane"/>
    <property type="evidence" value="ECO:0007669"/>
    <property type="project" value="UniProtKB-SubCell"/>
</dbReference>
<dbReference type="GO" id="GO:0020037">
    <property type="term" value="F:heme binding"/>
    <property type="evidence" value="ECO:0007669"/>
    <property type="project" value="InterPro"/>
</dbReference>
<dbReference type="GO" id="GO:0005506">
    <property type="term" value="F:iron ion binding"/>
    <property type="evidence" value="ECO:0007669"/>
    <property type="project" value="InterPro"/>
</dbReference>
<dbReference type="GO" id="GO:0004497">
    <property type="term" value="F:monooxygenase activity"/>
    <property type="evidence" value="ECO:0007669"/>
    <property type="project" value="UniProtKB-KW"/>
</dbReference>
<dbReference type="GO" id="GO:0016705">
    <property type="term" value="F:oxidoreductase activity, acting on paired donors, with incorporation or reduction of molecular oxygen"/>
    <property type="evidence" value="ECO:0007669"/>
    <property type="project" value="InterPro"/>
</dbReference>
<dbReference type="GO" id="GO:0050616">
    <property type="term" value="F:secologanin synthase activity"/>
    <property type="evidence" value="ECO:0007669"/>
    <property type="project" value="UniProtKB-EC"/>
</dbReference>
<dbReference type="GO" id="GO:0009820">
    <property type="term" value="P:alkaloid metabolic process"/>
    <property type="evidence" value="ECO:0007669"/>
    <property type="project" value="UniProtKB-KW"/>
</dbReference>
<dbReference type="CDD" id="cd20642">
    <property type="entry name" value="CYP72"/>
    <property type="match status" value="1"/>
</dbReference>
<dbReference type="FunFam" id="1.10.630.10:FF:000029">
    <property type="entry name" value="Cytochrome P450 734A1"/>
    <property type="match status" value="1"/>
</dbReference>
<dbReference type="Gene3D" id="1.10.630.10">
    <property type="entry name" value="Cytochrome P450"/>
    <property type="match status" value="1"/>
</dbReference>
<dbReference type="InterPro" id="IPR001128">
    <property type="entry name" value="Cyt_P450"/>
</dbReference>
<dbReference type="InterPro" id="IPR017972">
    <property type="entry name" value="Cyt_P450_CS"/>
</dbReference>
<dbReference type="InterPro" id="IPR002401">
    <property type="entry name" value="Cyt_P450_E_grp-I"/>
</dbReference>
<dbReference type="InterPro" id="IPR036396">
    <property type="entry name" value="Cyt_P450_sf"/>
</dbReference>
<dbReference type="InterPro" id="IPR050665">
    <property type="entry name" value="Cytochrome_P450_Monooxygen"/>
</dbReference>
<dbReference type="PANTHER" id="PTHR24282:SF255">
    <property type="entry name" value="CYTOCHROME P450 72A11-RELATED"/>
    <property type="match status" value="1"/>
</dbReference>
<dbReference type="PANTHER" id="PTHR24282">
    <property type="entry name" value="CYTOCHROME P450 FAMILY MEMBER"/>
    <property type="match status" value="1"/>
</dbReference>
<dbReference type="Pfam" id="PF00067">
    <property type="entry name" value="p450"/>
    <property type="match status" value="1"/>
</dbReference>
<dbReference type="PRINTS" id="PR00463">
    <property type="entry name" value="EP450I"/>
</dbReference>
<dbReference type="PRINTS" id="PR00385">
    <property type="entry name" value="P450"/>
</dbReference>
<dbReference type="SUPFAM" id="SSF48264">
    <property type="entry name" value="Cytochrome P450"/>
    <property type="match status" value="1"/>
</dbReference>
<dbReference type="PROSITE" id="PS00086">
    <property type="entry name" value="CYTOCHROME_P450"/>
    <property type="match status" value="1"/>
</dbReference>
<reference key="1">
    <citation type="journal article" date="1992" name="Plant Physiol.">
        <title>Molecular analysis and heterologous expression of an inducible cytochrome P-450 protein from periwinkle (Catharanthus roseus L.).</title>
        <authorList>
            <person name="Vetter H.-P."/>
            <person name="Mangold U."/>
            <person name="Schroeder G."/>
            <person name="Marner F.-J."/>
            <person name="Werck-Reichhart D."/>
            <person name="Schroeder J."/>
        </authorList>
    </citation>
    <scope>NUCLEOTIDE SEQUENCE [MRNA]</scope>
    <source>
        <strain>cv. CP3A</strain>
    </source>
</reference>
<reference key="2">
    <citation type="journal article" date="1993" name="Plant Mol. Biol.">
        <title>Isolation of cytochrome P-450 cDNA clones from the higher plant Catharanthus roseus by a PCR strategy.</title>
        <authorList>
            <person name="Meijer A.H."/>
            <person name="Souer E."/>
            <person name="Verpoorte R."/>
            <person name="Hoge J.H.C."/>
        </authorList>
    </citation>
    <scope>NUCLEOTIDE SEQUENCE [MRNA] OF 469-524</scope>
    <source>
        <strain>cv. G. Don</strain>
    </source>
</reference>
<reference key="3">
    <citation type="journal article" date="2000" name="Plant J.">
        <title>Indole alkaloid biosynthesis in Catharanthus roseus: new enzyme activities and identification of cytochrome P450 CYP72A1 as secologanin synthase.</title>
        <authorList>
            <person name="Irmler S."/>
            <person name="Schroeder G."/>
            <person name="St Pierre B."/>
            <person name="Crouch N.P."/>
            <person name="Hotze M."/>
            <person name="Schmidt J."/>
            <person name="Strack D."/>
            <person name="Matern U."/>
            <person name="Schroeder J."/>
        </authorList>
    </citation>
    <scope>FUNCTION</scope>
    <scope>CATALYTIC ACTIVITY</scope>
    <source>
        <strain>cv. CP3A</strain>
    </source>
</reference>
<reference key="4">
    <citation type="journal article" date="2011" name="FEBS J.">
        <title>The subcellular organization of strictosidine biosynthesis in Catharanthus roseus epidermis highlights several trans-tonoplast translocations of intermediate metabolites.</title>
        <authorList>
            <person name="Guirimand G."/>
            <person name="Guihur A."/>
            <person name="Ginis O."/>
            <person name="Poutrain P."/>
            <person name="Hericourt F."/>
            <person name="Oudin A."/>
            <person name="Lanoue A."/>
            <person name="St-Pierre B."/>
            <person name="Burlat V."/>
            <person name="Courdavault V."/>
        </authorList>
    </citation>
    <scope>SUBCELLULAR LOCATION</scope>
</reference>
<reference key="5">
    <citation type="journal article" date="2015" name="BMC Genomics">
        <title>Characterization of a second secologanin synthase isoform producing both secologanin and secoxyloganin allows enhanced de novo assembly of a Catharanthus roseus transcriptome.</title>
        <authorList>
            <person name="Duge de Bernonville T."/>
            <person name="Foureau E."/>
            <person name="Parage C."/>
            <person name="Lanoue A."/>
            <person name="Clastre M."/>
            <person name="Londono M.A."/>
            <person name="Oudin A."/>
            <person name="Houille B."/>
            <person name="Papon N."/>
            <person name="Besseau S."/>
            <person name="Glevarec G."/>
            <person name="Atehortua L."/>
            <person name="Giglioli-Guivarc'h N."/>
            <person name="St-Pierre B."/>
            <person name="De Luca V."/>
            <person name="O'Connor S.E."/>
            <person name="Courdavault V."/>
        </authorList>
    </citation>
    <scope>FUNCTION</scope>
    <scope>CATALYTIC ACTIVITY</scope>
</reference>
<protein>
    <recommendedName>
        <fullName evidence="8">Secologanin synthase 1</fullName>
        <ecNumber evidence="3 5">1.14.19.62</ecNumber>
    </recommendedName>
    <alternativeName>
        <fullName evidence="9">CYPLXXII</fullName>
    </alternativeName>
    <alternativeName>
        <fullName evidence="6">Cytochrome P450 72A1</fullName>
    </alternativeName>
    <alternativeName>
        <fullName evidence="9">Secologanin synthase</fullName>
    </alternativeName>
</protein>
<name>SLS1_CATRO</name>
<organism>
    <name type="scientific">Catharanthus roseus</name>
    <name type="common">Madagascar periwinkle</name>
    <name type="synonym">Vinca rosea</name>
    <dbReference type="NCBI Taxonomy" id="4058"/>
    <lineage>
        <taxon>Eukaryota</taxon>
        <taxon>Viridiplantae</taxon>
        <taxon>Streptophyta</taxon>
        <taxon>Embryophyta</taxon>
        <taxon>Tracheophyta</taxon>
        <taxon>Spermatophyta</taxon>
        <taxon>Magnoliopsida</taxon>
        <taxon>eudicotyledons</taxon>
        <taxon>Gunneridae</taxon>
        <taxon>Pentapetalae</taxon>
        <taxon>asterids</taxon>
        <taxon>lamiids</taxon>
        <taxon>Gentianales</taxon>
        <taxon>Apocynaceae</taxon>
        <taxon>Rauvolfioideae</taxon>
        <taxon>Vinceae</taxon>
        <taxon>Catharanthinae</taxon>
        <taxon>Catharanthus</taxon>
    </lineage>
</organism>
<proteinExistence type="evidence at protein level"/>
<feature type="chain" id="PRO_0000052124" description="Secologanin synthase 1">
    <location>
        <begin position="1"/>
        <end position="524"/>
    </location>
</feature>
<feature type="topological domain" description="Lumenal" evidence="10">
    <location>
        <begin position="1"/>
        <end position="11"/>
    </location>
</feature>
<feature type="transmembrane region" description="Helical" evidence="2">
    <location>
        <begin position="12"/>
        <end position="32"/>
    </location>
</feature>
<feature type="topological domain" description="Cytoplasmic" evidence="10">
    <location>
        <begin position="33"/>
        <end position="524"/>
    </location>
</feature>
<feature type="binding site" description="axial binding residue" evidence="1">
    <location>
        <position position="470"/>
    </location>
    <ligand>
        <name>heme</name>
        <dbReference type="ChEBI" id="CHEBI:30413"/>
    </ligand>
    <ligandPart>
        <name>Fe</name>
        <dbReference type="ChEBI" id="CHEBI:18248"/>
    </ligandPart>
</feature>
<feature type="sequence variant">
    <original>I</original>
    <variation>L</variation>
    <location>
        <position position="190"/>
    </location>
</feature>
<feature type="sequence variant">
    <original>Q</original>
    <variation>E</variation>
    <location>
        <position position="194"/>
    </location>
</feature>
<feature type="sequence variant">
    <original>E</original>
    <variation>D</variation>
    <location>
        <position position="223"/>
    </location>
</feature>
<feature type="sequence variant">
    <original>K</original>
    <variation>R</variation>
    <location>
        <position position="312"/>
    </location>
</feature>
<feature type="sequence variant">
    <original>S</original>
    <variation>T</variation>
    <location>
        <position position="318"/>
    </location>
</feature>
<feature type="sequence variant">
    <original>V</original>
    <variation>I</variation>
    <location>
        <position position="403"/>
    </location>
</feature>
<feature type="sequence variant">
    <original>K</original>
    <variation>E</variation>
    <location>
        <position position="405"/>
    </location>
</feature>
<feature type="sequence variant">
    <original>S</original>
    <variation>P</variation>
    <location>
        <position position="411"/>
    </location>
</feature>
<gene>
    <name evidence="8" type="primary">SLS1</name>
    <name evidence="7" type="synonym">CYP72</name>
    <name evidence="6" type="synonym">CYP72A1</name>
    <name evidence="9" type="synonym">P450CR3</name>
    <name evidence="9" type="synonym">SLS</name>
</gene>
<comment type="function">
    <text evidence="3 5">Component of the seco-iridoid and derivatives monoterpenoid indole alkaloids (MIAs, e.g. secologanin) biosynthesis pathway. Catalyzes the conversion of loganin into secologanin (PubMed:11135113, PubMed:26285573). Catalyzes the conversion of secologanin into secoxyloganin (PubMed:26285573).</text>
</comment>
<comment type="catalytic activity">
    <reaction evidence="3 5">
        <text>loganin + reduced [NADPH--hemoprotein reductase] + O2 = secologanin + oxidized [NADPH--hemoprotein reductase] + 2 H2O + H(+)</text>
        <dbReference type="Rhea" id="RHEA:20585"/>
        <dbReference type="Rhea" id="RHEA-COMP:11964"/>
        <dbReference type="Rhea" id="RHEA-COMP:11965"/>
        <dbReference type="ChEBI" id="CHEBI:15377"/>
        <dbReference type="ChEBI" id="CHEBI:15378"/>
        <dbReference type="ChEBI" id="CHEBI:15379"/>
        <dbReference type="ChEBI" id="CHEBI:15771"/>
        <dbReference type="ChEBI" id="CHEBI:18002"/>
        <dbReference type="ChEBI" id="CHEBI:57618"/>
        <dbReference type="ChEBI" id="CHEBI:58210"/>
        <dbReference type="EC" id="1.14.19.62"/>
    </reaction>
    <physiologicalReaction direction="left-to-right" evidence="5">
        <dbReference type="Rhea" id="RHEA:20586"/>
    </physiologicalReaction>
</comment>
<comment type="catalytic activity">
    <reaction evidence="5">
        <text>secologanin + reduced [NADPH--hemoprotein reductase] + O2 = secoxyloganin + oxidized [NADPH--hemoprotein reductase] + H2O + 2 H(+)</text>
        <dbReference type="Rhea" id="RHEA:72667"/>
        <dbReference type="Rhea" id="RHEA-COMP:11964"/>
        <dbReference type="Rhea" id="RHEA-COMP:11965"/>
        <dbReference type="ChEBI" id="CHEBI:15377"/>
        <dbReference type="ChEBI" id="CHEBI:15378"/>
        <dbReference type="ChEBI" id="CHEBI:15379"/>
        <dbReference type="ChEBI" id="CHEBI:18002"/>
        <dbReference type="ChEBI" id="CHEBI:57618"/>
        <dbReference type="ChEBI" id="CHEBI:58210"/>
        <dbReference type="ChEBI" id="CHEBI:192364"/>
    </reaction>
    <physiologicalReaction direction="left-to-right" evidence="5">
        <dbReference type="Rhea" id="RHEA:72668"/>
    </physiologicalReaction>
</comment>
<comment type="cofactor">
    <cofactor evidence="1">
        <name>heme</name>
        <dbReference type="ChEBI" id="CHEBI:30413"/>
    </cofactor>
</comment>
<comment type="pathway">
    <text>Alkaloid biosynthesis; secologanin biosynthesis.</text>
</comment>
<comment type="subcellular location">
    <subcellularLocation>
        <location evidence="4">Endoplasmic reticulum membrane</location>
        <topology evidence="2">Single-pass membrane protein</topology>
    </subcellularLocation>
</comment>
<comment type="tissue specificity">
    <text>Upper and lower leaf epidermis.</text>
</comment>
<comment type="similarity">
    <text evidence="9">Belongs to the cytochrome P450 family.</text>
</comment>
<evidence type="ECO:0000250" key="1">
    <source>
        <dbReference type="UniProtKB" id="Q94IP1"/>
    </source>
</evidence>
<evidence type="ECO:0000255" key="2"/>
<evidence type="ECO:0000269" key="3">
    <source>
    </source>
</evidence>
<evidence type="ECO:0000269" key="4">
    <source>
    </source>
</evidence>
<evidence type="ECO:0000269" key="5">
    <source>
    </source>
</evidence>
<evidence type="ECO:0000303" key="6">
    <source>
    </source>
</evidence>
<evidence type="ECO:0000303" key="7">
    <source>
    </source>
</evidence>
<evidence type="ECO:0000303" key="8">
    <source>
    </source>
</evidence>
<evidence type="ECO:0000305" key="9"/>
<evidence type="ECO:0000305" key="10">
    <source>
    </source>
</evidence>